<reference key="1">
    <citation type="thesis" date="1992" institute="University of Rennes" country="France">
        <authorList>
            <person name="Saulier-Le Drean B.M."/>
        </authorList>
    </citation>
    <scope>NUCLEOTIDE SEQUENCE [MRNA]</scope>
    <source>
        <tissue>Ovary</tissue>
    </source>
</reference>
<reference key="2">
    <citation type="journal article" date="1993" name="Biochem. Biophys. Res. Commun.">
        <title>Isolation of cDNAs encoding the catalytic domain of poly(ADP-ribose) polymerase from Xenopus laevis and cherry salmon using heterologous oligonucleotide consensus sequences.</title>
        <authorList>
            <person name="Ozawa Y."/>
            <person name="Uchida K."/>
            <person name="Uchida M."/>
            <person name="Ami Y."/>
            <person name="Kushida S."/>
            <person name="Okada N."/>
            <person name="Miwa M."/>
        </authorList>
    </citation>
    <scope>NUCLEOTIDE SEQUENCE [MRNA] OF 742-876</scope>
</reference>
<gene>
    <name type="primary">parp1</name>
</gene>
<dbReference type="EC" id="2.4.2.30" evidence="1"/>
<dbReference type="EC" id="2.4.2.-" evidence="1"/>
<dbReference type="EMBL" id="Z12139">
    <property type="protein sequence ID" value="CAA78126.1"/>
    <property type="molecule type" value="mRNA"/>
</dbReference>
<dbReference type="EMBL" id="D13810">
    <property type="protein sequence ID" value="BAA02966.1"/>
    <property type="molecule type" value="mRNA"/>
</dbReference>
<dbReference type="PIR" id="S31735">
    <property type="entry name" value="S31735"/>
</dbReference>
<dbReference type="SMR" id="P31669"/>
<dbReference type="IntAct" id="P31669">
    <property type="interactions" value="1"/>
</dbReference>
<dbReference type="AGR" id="Xenbase:XB-GENE-974938"/>
<dbReference type="Xenbase" id="XB-GENE-974938">
    <property type="gene designation" value="parp1.L"/>
</dbReference>
<dbReference type="CD-CODE" id="78E86D56">
    <property type="entry name" value="Mitochondrial cloud"/>
</dbReference>
<dbReference type="Proteomes" id="UP000186698">
    <property type="component" value="Unplaced"/>
</dbReference>
<dbReference type="GO" id="GO:0000785">
    <property type="term" value="C:chromatin"/>
    <property type="evidence" value="ECO:0000250"/>
    <property type="project" value="UniProtKB"/>
</dbReference>
<dbReference type="GO" id="GO:0005829">
    <property type="term" value="C:cytosol"/>
    <property type="evidence" value="ECO:0000250"/>
    <property type="project" value="UniProtKB"/>
</dbReference>
<dbReference type="GO" id="GO:0043596">
    <property type="term" value="C:nuclear replication fork"/>
    <property type="evidence" value="ECO:0000250"/>
    <property type="project" value="UniProtKB"/>
</dbReference>
<dbReference type="GO" id="GO:0005730">
    <property type="term" value="C:nucleolus"/>
    <property type="evidence" value="ECO:0000318"/>
    <property type="project" value="GO_Central"/>
</dbReference>
<dbReference type="GO" id="GO:0035861">
    <property type="term" value="C:site of double-strand break"/>
    <property type="evidence" value="ECO:0000250"/>
    <property type="project" value="UniProtKB"/>
</dbReference>
<dbReference type="GO" id="GO:0003684">
    <property type="term" value="F:damaged DNA binding"/>
    <property type="evidence" value="ECO:0000250"/>
    <property type="project" value="UniProtKB"/>
</dbReference>
<dbReference type="GO" id="GO:0051287">
    <property type="term" value="F:NAD binding"/>
    <property type="evidence" value="ECO:0007669"/>
    <property type="project" value="InterPro"/>
</dbReference>
<dbReference type="GO" id="GO:0003950">
    <property type="term" value="F:NAD+ poly-ADP-ribosyltransferase activity"/>
    <property type="evidence" value="ECO:0000250"/>
    <property type="project" value="UniProtKB"/>
</dbReference>
<dbReference type="GO" id="GO:1990404">
    <property type="term" value="F:NAD+-protein mono-ADP-ribosyltransferase activity"/>
    <property type="evidence" value="ECO:0000250"/>
    <property type="project" value="UniProtKB"/>
</dbReference>
<dbReference type="GO" id="GO:0140806">
    <property type="term" value="F:NAD+-protein-aspartate ADP-ribosyltransferase activity"/>
    <property type="evidence" value="ECO:0000250"/>
    <property type="project" value="UniProtKB"/>
</dbReference>
<dbReference type="GO" id="GO:0140807">
    <property type="term" value="F:NAD+-protein-glutamate ADP-ribosyltransferase activity"/>
    <property type="evidence" value="ECO:0000250"/>
    <property type="project" value="UniProtKB"/>
</dbReference>
<dbReference type="GO" id="GO:0140815">
    <property type="term" value="F:NAD+-protein-histidine ADP-ribosyltransferase activity"/>
    <property type="evidence" value="ECO:0000250"/>
    <property type="project" value="UniProtKB"/>
</dbReference>
<dbReference type="GO" id="GO:0140805">
    <property type="term" value="F:NAD+-protein-serine ADP-ribosyltransferase activity"/>
    <property type="evidence" value="ECO:0000250"/>
    <property type="project" value="UniProtKB"/>
</dbReference>
<dbReference type="GO" id="GO:0140808">
    <property type="term" value="F:NAD+-protein-tyrosine ADP-ribosyltransferase activity"/>
    <property type="evidence" value="ECO:0000250"/>
    <property type="project" value="UniProtKB"/>
</dbReference>
<dbReference type="GO" id="GO:0031491">
    <property type="term" value="F:nucleosome binding"/>
    <property type="evidence" value="ECO:0000250"/>
    <property type="project" value="UniProtKB"/>
</dbReference>
<dbReference type="GO" id="GO:0016779">
    <property type="term" value="F:nucleotidyltransferase activity"/>
    <property type="evidence" value="ECO:0007669"/>
    <property type="project" value="UniProtKB-KW"/>
</dbReference>
<dbReference type="GO" id="GO:0042803">
    <property type="term" value="F:protein homodimerization activity"/>
    <property type="evidence" value="ECO:0000250"/>
    <property type="project" value="UniProtKB"/>
</dbReference>
<dbReference type="GO" id="GO:0008270">
    <property type="term" value="F:zinc ion binding"/>
    <property type="evidence" value="ECO:0000250"/>
    <property type="project" value="UniProtKB"/>
</dbReference>
<dbReference type="GO" id="GO:1990966">
    <property type="term" value="P:ATP generation from poly-ADP-D-ribose"/>
    <property type="evidence" value="ECO:0000250"/>
    <property type="project" value="UniProtKB"/>
</dbReference>
<dbReference type="GO" id="GO:0030592">
    <property type="term" value="P:DNA ADP-ribosylation"/>
    <property type="evidence" value="ECO:0000250"/>
    <property type="project" value="UniProtKB"/>
</dbReference>
<dbReference type="GO" id="GO:0006302">
    <property type="term" value="P:double-strand break repair"/>
    <property type="evidence" value="ECO:0000318"/>
    <property type="project" value="GO_Central"/>
</dbReference>
<dbReference type="GO" id="GO:0045087">
    <property type="term" value="P:innate immune response"/>
    <property type="evidence" value="ECO:0007669"/>
    <property type="project" value="UniProtKB-KW"/>
</dbReference>
<dbReference type="GO" id="GO:0045824">
    <property type="term" value="P:negative regulation of innate immune response"/>
    <property type="evidence" value="ECO:0000250"/>
    <property type="project" value="UniProtKB"/>
</dbReference>
<dbReference type="GO" id="GO:0000122">
    <property type="term" value="P:negative regulation of transcription by RNA polymerase II"/>
    <property type="evidence" value="ECO:0000250"/>
    <property type="project" value="UniProtKB"/>
</dbReference>
<dbReference type="GO" id="GO:1905168">
    <property type="term" value="P:positive regulation of double-strand break repair via homologous recombination"/>
    <property type="evidence" value="ECO:0000250"/>
    <property type="project" value="UniProtKB"/>
</dbReference>
<dbReference type="GO" id="GO:1903518">
    <property type="term" value="P:positive regulation of single strand break repair"/>
    <property type="evidence" value="ECO:0000318"/>
    <property type="project" value="GO_Central"/>
</dbReference>
<dbReference type="GO" id="GO:0070213">
    <property type="term" value="P:protein auto-ADP-ribosylation"/>
    <property type="evidence" value="ECO:0000250"/>
    <property type="project" value="UniProtKB"/>
</dbReference>
<dbReference type="GO" id="GO:0070212">
    <property type="term" value="P:protein poly-ADP-ribosylation"/>
    <property type="evidence" value="ECO:0000250"/>
    <property type="project" value="UniProtKB"/>
</dbReference>
<dbReference type="GO" id="GO:0071932">
    <property type="term" value="P:replication fork reversal"/>
    <property type="evidence" value="ECO:0000250"/>
    <property type="project" value="UniProtKB"/>
</dbReference>
<dbReference type="CDD" id="cd17747">
    <property type="entry name" value="BRCT_PARP1"/>
    <property type="match status" value="1"/>
</dbReference>
<dbReference type="CDD" id="cd01437">
    <property type="entry name" value="parp_like"/>
    <property type="match status" value="1"/>
</dbReference>
<dbReference type="CDD" id="cd08001">
    <property type="entry name" value="WGR_PARP1_like"/>
    <property type="match status" value="1"/>
</dbReference>
<dbReference type="FunFam" id="1.10.20.130:FF:000001">
    <property type="entry name" value="Poly [ADP-ribose] polymerase"/>
    <property type="match status" value="1"/>
</dbReference>
<dbReference type="FunFam" id="1.20.142.10:FF:000001">
    <property type="entry name" value="Poly [ADP-ribose] polymerase"/>
    <property type="match status" value="1"/>
</dbReference>
<dbReference type="FunFam" id="2.20.25.630:FF:000001">
    <property type="entry name" value="Poly [ADP-ribose] polymerase"/>
    <property type="match status" value="1"/>
</dbReference>
<dbReference type="FunFam" id="3.30.1740.10:FF:000002">
    <property type="entry name" value="Poly [ADP-ribose] polymerase"/>
    <property type="match status" value="1"/>
</dbReference>
<dbReference type="FunFam" id="3.40.50.10190:FF:000030">
    <property type="entry name" value="Poly [ADP-ribose] polymerase"/>
    <property type="match status" value="1"/>
</dbReference>
<dbReference type="FunFam" id="3.90.228.10:FF:000002">
    <property type="entry name" value="Poly [ADP-ribose] polymerase"/>
    <property type="match status" value="1"/>
</dbReference>
<dbReference type="Gene3D" id="1.10.20.130">
    <property type="match status" value="1"/>
</dbReference>
<dbReference type="Gene3D" id="2.20.25.630">
    <property type="match status" value="1"/>
</dbReference>
<dbReference type="Gene3D" id="3.90.228.10">
    <property type="match status" value="1"/>
</dbReference>
<dbReference type="Gene3D" id="3.40.50.10190">
    <property type="entry name" value="BRCT domain"/>
    <property type="match status" value="1"/>
</dbReference>
<dbReference type="Gene3D" id="1.20.142.10">
    <property type="entry name" value="Poly(ADP-ribose) polymerase, regulatory domain"/>
    <property type="match status" value="1"/>
</dbReference>
<dbReference type="Gene3D" id="3.30.1740.10">
    <property type="entry name" value="Zinc finger, PARP-type"/>
    <property type="match status" value="2"/>
</dbReference>
<dbReference type="InterPro" id="IPR050800">
    <property type="entry name" value="ARTD/PARP"/>
</dbReference>
<dbReference type="InterPro" id="IPR001357">
    <property type="entry name" value="BRCT_dom"/>
</dbReference>
<dbReference type="InterPro" id="IPR036420">
    <property type="entry name" value="BRCT_dom_sf"/>
</dbReference>
<dbReference type="InterPro" id="IPR038650">
    <property type="entry name" value="PADR1_C_dom_sf"/>
</dbReference>
<dbReference type="InterPro" id="IPR008288">
    <property type="entry name" value="PARP"/>
</dbReference>
<dbReference type="InterPro" id="IPR049296">
    <property type="entry name" value="PARP1-like_PADR1_N"/>
</dbReference>
<dbReference type="InterPro" id="IPR012982">
    <property type="entry name" value="PARP1-like_PADR1_Zn_ribbon"/>
</dbReference>
<dbReference type="InterPro" id="IPR012317">
    <property type="entry name" value="Poly(ADP-ribose)pol_cat_dom"/>
</dbReference>
<dbReference type="InterPro" id="IPR004102">
    <property type="entry name" value="Poly(ADP-ribose)pol_reg_dom"/>
</dbReference>
<dbReference type="InterPro" id="IPR036616">
    <property type="entry name" value="Poly(ADP-ribose)pol_reg_dom_sf"/>
</dbReference>
<dbReference type="InterPro" id="IPR036930">
    <property type="entry name" value="WGR_dom_sf"/>
</dbReference>
<dbReference type="InterPro" id="IPR008893">
    <property type="entry name" value="WGR_domain"/>
</dbReference>
<dbReference type="InterPro" id="IPR001510">
    <property type="entry name" value="Znf_PARP"/>
</dbReference>
<dbReference type="InterPro" id="IPR036957">
    <property type="entry name" value="Znf_PARP_sf"/>
</dbReference>
<dbReference type="PANTHER" id="PTHR10459">
    <property type="entry name" value="DNA LIGASE"/>
    <property type="match status" value="1"/>
</dbReference>
<dbReference type="PANTHER" id="PTHR10459:SF112">
    <property type="entry name" value="POLY [ADP-RIBOSE] POLYMERASE 1"/>
    <property type="match status" value="1"/>
</dbReference>
<dbReference type="Pfam" id="PF00533">
    <property type="entry name" value="BRCT"/>
    <property type="match status" value="1"/>
</dbReference>
<dbReference type="Pfam" id="PF21728">
    <property type="entry name" value="PADR1_N"/>
    <property type="match status" value="1"/>
</dbReference>
<dbReference type="Pfam" id="PF00644">
    <property type="entry name" value="PARP"/>
    <property type="match status" value="1"/>
</dbReference>
<dbReference type="Pfam" id="PF02877">
    <property type="entry name" value="PARP_reg"/>
    <property type="match status" value="1"/>
</dbReference>
<dbReference type="Pfam" id="PF05406">
    <property type="entry name" value="WGR"/>
    <property type="match status" value="1"/>
</dbReference>
<dbReference type="Pfam" id="PF00645">
    <property type="entry name" value="zf-PARP"/>
    <property type="match status" value="2"/>
</dbReference>
<dbReference type="Pfam" id="PF08063">
    <property type="entry name" value="Zn_ribbon_PADR1"/>
    <property type="match status" value="1"/>
</dbReference>
<dbReference type="PIRSF" id="PIRSF000489">
    <property type="entry name" value="NAD_ADPRT"/>
    <property type="match status" value="1"/>
</dbReference>
<dbReference type="SMART" id="SM00292">
    <property type="entry name" value="BRCT"/>
    <property type="match status" value="1"/>
</dbReference>
<dbReference type="SMART" id="SM01335">
    <property type="entry name" value="PADR1"/>
    <property type="match status" value="1"/>
</dbReference>
<dbReference type="SMART" id="SM00773">
    <property type="entry name" value="WGR"/>
    <property type="match status" value="1"/>
</dbReference>
<dbReference type="SMART" id="SM01336">
    <property type="entry name" value="zf-PARP"/>
    <property type="match status" value="2"/>
</dbReference>
<dbReference type="SUPFAM" id="SSF56399">
    <property type="entry name" value="ADP-ribosylation"/>
    <property type="match status" value="1"/>
</dbReference>
<dbReference type="SUPFAM" id="SSF52113">
    <property type="entry name" value="BRCT domain"/>
    <property type="match status" value="1"/>
</dbReference>
<dbReference type="SUPFAM" id="SSF47587">
    <property type="entry name" value="Domain of poly(ADP-ribose) polymerase"/>
    <property type="match status" value="1"/>
</dbReference>
<dbReference type="SUPFAM" id="SSF57716">
    <property type="entry name" value="Glucocorticoid receptor-like (DNA-binding domain)"/>
    <property type="match status" value="2"/>
</dbReference>
<dbReference type="SUPFAM" id="SSF142921">
    <property type="entry name" value="WGR domain-like"/>
    <property type="match status" value="1"/>
</dbReference>
<dbReference type="PROSITE" id="PS50172">
    <property type="entry name" value="BRCT"/>
    <property type="match status" value="1"/>
</dbReference>
<dbReference type="PROSITE" id="PS52007">
    <property type="entry name" value="PADR1"/>
    <property type="match status" value="1"/>
</dbReference>
<dbReference type="PROSITE" id="PS51060">
    <property type="entry name" value="PARP_ALPHA_HD"/>
    <property type="match status" value="1"/>
</dbReference>
<dbReference type="PROSITE" id="PS51059">
    <property type="entry name" value="PARP_CATALYTIC"/>
    <property type="match status" value="1"/>
</dbReference>
<dbReference type="PROSITE" id="PS51977">
    <property type="entry name" value="WGR"/>
    <property type="match status" value="1"/>
</dbReference>
<dbReference type="PROSITE" id="PS00347">
    <property type="entry name" value="ZF_PARP_1"/>
    <property type="match status" value="2"/>
</dbReference>
<dbReference type="PROSITE" id="PS50064">
    <property type="entry name" value="ZF_PARP_2"/>
    <property type="match status" value="2"/>
</dbReference>
<name>PARP1_XENLA</name>
<evidence type="ECO:0000250" key="1">
    <source>
        <dbReference type="UniProtKB" id="P09874"/>
    </source>
</evidence>
<evidence type="ECO:0000250" key="2">
    <source>
        <dbReference type="UniProtKB" id="P11103"/>
    </source>
</evidence>
<evidence type="ECO:0000250" key="3">
    <source>
        <dbReference type="UniProtKB" id="Q5RHR0"/>
    </source>
</evidence>
<evidence type="ECO:0000250" key="4">
    <source>
        <dbReference type="UniProtKB" id="Q9UGN5"/>
    </source>
</evidence>
<evidence type="ECO:0000255" key="5"/>
<evidence type="ECO:0000255" key="6">
    <source>
        <dbReference type="PROSITE-ProRule" id="PRU00033"/>
    </source>
</evidence>
<evidence type="ECO:0000255" key="7">
    <source>
        <dbReference type="PROSITE-ProRule" id="PRU00264"/>
    </source>
</evidence>
<evidence type="ECO:0000255" key="8">
    <source>
        <dbReference type="PROSITE-ProRule" id="PRU00397"/>
    </source>
</evidence>
<evidence type="ECO:0000255" key="9">
    <source>
        <dbReference type="PROSITE-ProRule" id="PRU00398"/>
    </source>
</evidence>
<evidence type="ECO:0000255" key="10">
    <source>
        <dbReference type="PROSITE-ProRule" id="PRU01321"/>
    </source>
</evidence>
<evidence type="ECO:0000255" key="11">
    <source>
        <dbReference type="PROSITE-ProRule" id="PRU01351"/>
    </source>
</evidence>
<evidence type="ECO:0000256" key="12">
    <source>
        <dbReference type="SAM" id="MobiDB-lite"/>
    </source>
</evidence>
<evidence type="ECO:0000305" key="13"/>
<keyword id="KW-0013">ADP-ribosylation</keyword>
<keyword id="KW-0021">Allosteric enzyme</keyword>
<keyword id="KW-0158">Chromosome</keyword>
<keyword id="KW-0963">Cytoplasm</keyword>
<keyword id="KW-0227">DNA damage</keyword>
<keyword id="KW-0234">DNA repair</keyword>
<keyword id="KW-0238">DNA-binding</keyword>
<keyword id="KW-0328">Glycosyltransferase</keyword>
<keyword id="KW-0391">Immunity</keyword>
<keyword id="KW-0399">Innate immunity</keyword>
<keyword id="KW-1017">Isopeptide bond</keyword>
<keyword id="KW-0479">Metal-binding</keyword>
<keyword id="KW-0520">NAD</keyword>
<keyword id="KW-0548">Nucleotidyltransferase</keyword>
<keyword id="KW-0539">Nucleus</keyword>
<keyword id="KW-1185">Reference proteome</keyword>
<keyword id="KW-0677">Repeat</keyword>
<keyword id="KW-0804">Transcription</keyword>
<keyword id="KW-0805">Transcription regulation</keyword>
<keyword id="KW-0808">Transferase</keyword>
<keyword id="KW-0862">Zinc</keyword>
<keyword id="KW-0863">Zinc-finger</keyword>
<comment type="function">
    <text evidence="1 2 3">Poly-ADP-ribosyltransferase that mediates poly-ADP-ribosylation of proteins and plays a key role in DNA repair (By similarity). Mediates glutamate, aspartate, serine, histidine or tyrosine ADP-ribosylation of proteins: the ADP-D-ribosyl group of NAD(+) is transferred to the acceptor carboxyl group of target residues and further ADP-ribosyl groups are transferred to the 2'-position of the terminal adenosine moiety, building up a polymer with an average chain length of 20-30 units. Serine ADP-ribosylation of proteins constitutes the primary form of ADP-ribosylation of proteins in response to DNA damage (By similarity). Specificity for the different amino acids is conferred by interacting factors, such as hpf1 and nmnat1 (By similarity). Following interaction with hpf1, catalyzes serine ADP-ribosylation of target proteins; hpf1 confers serine specificity by completing the parp1 active site. Also catalyzes tyrosine ADP-ribosylation of target proteins following interaction with hpf1 (By similarity). Following interaction with nmnat1, catalyzes glutamate and aspartate ADP-ribosylation of target proteins; nmnat1 confers glutamate and aspartate specificity (By similarity). Parp1 initiates the repair of DNA breaks: recognizes and binds DNA breaks within chromatin and recruits hpf1, licensing serine ADP-ribosylation of target proteins, such as histones (H2BS6ADPr and H3S10ADPr), thereby promoting decompaction of chromatin and the recruitment of repair factors leading to the reparation of DNA strand breaks. In addition to base excision repair (BER) pathway, also involved in double-strand breaks (DSBs) repair. Mediates the poly-ADP-ribosylation of a number of proteins. In addition to proteins, also able to ADP-ribosylate DNA: catalyzes ADP-ribosylation of DNA strand break termini containing terminal phosphates and a 2'-OH group in single- and double-stranded DNA, respectively (By similarity). Parp1-mediated DNA repair in neurons plays a role in sleep: senses DNA damage in neurons and promotes sleep, facilitating efficient DNA repair (By similarity). In addition to DNA repair, also involved in other processes, such as transcription regulation, programmed cell death, membrane repair, adipogenesis and innate immunity (By similarity). Acts as a repressor of transcription: binds to nucleosomes and modulates chromatin structure in a manner similar to histone H1, thereby altering RNA polymerase II. Acts both as a positive and negative regulator of transcription elongation, depending on the context (By similarity). Poly-ADP-ribose chains generated by parp1 also play a role in poly-ADP-ribose-dependent cell death, a process named parthanatos. Also acts as a negative regulator of the cGAS-STING pathway by mediating poly-ADP-ribosylation and inactivation of cgas. Acts as a negative regulator of adipogenesis by catalyzing poly ADP-ribosylation of histone H2B on 'Glu-35' (H2BE35ADPr) (By similarity).</text>
</comment>
<comment type="catalytic activity">
    <reaction evidence="1">
        <text>NAD(+) + (ADP-D-ribosyl)n-acceptor = nicotinamide + (ADP-D-ribosyl)n+1-acceptor + H(+).</text>
        <dbReference type="EC" id="2.4.2.30"/>
    </reaction>
</comment>
<comment type="catalytic activity">
    <reaction evidence="1">
        <text>L-seryl-[protein] + NAD(+) = O-(ADP-D-ribosyl)-L-seryl-[protein] + nicotinamide + H(+)</text>
        <dbReference type="Rhea" id="RHEA:58232"/>
        <dbReference type="Rhea" id="RHEA-COMP:9863"/>
        <dbReference type="Rhea" id="RHEA-COMP:15091"/>
        <dbReference type="ChEBI" id="CHEBI:15378"/>
        <dbReference type="ChEBI" id="CHEBI:17154"/>
        <dbReference type="ChEBI" id="CHEBI:29999"/>
        <dbReference type="ChEBI" id="CHEBI:57540"/>
        <dbReference type="ChEBI" id="CHEBI:142556"/>
    </reaction>
    <physiologicalReaction direction="left-to-right" evidence="1">
        <dbReference type="Rhea" id="RHEA:58233"/>
    </physiologicalReaction>
</comment>
<comment type="catalytic activity">
    <reaction evidence="2">
        <text>L-aspartyl-[protein] + NAD(+) = 4-O-(ADP-D-ribosyl)-L-aspartyl-[protein] + nicotinamide</text>
        <dbReference type="Rhea" id="RHEA:54424"/>
        <dbReference type="Rhea" id="RHEA-COMP:9867"/>
        <dbReference type="Rhea" id="RHEA-COMP:13832"/>
        <dbReference type="ChEBI" id="CHEBI:17154"/>
        <dbReference type="ChEBI" id="CHEBI:29961"/>
        <dbReference type="ChEBI" id="CHEBI:57540"/>
        <dbReference type="ChEBI" id="CHEBI:138102"/>
    </reaction>
    <physiologicalReaction direction="left-to-right" evidence="2">
        <dbReference type="Rhea" id="RHEA:54425"/>
    </physiologicalReaction>
</comment>
<comment type="catalytic activity">
    <reaction evidence="2">
        <text>L-glutamyl-[protein] + NAD(+) = 5-O-(ADP-D-ribosyl)-L-glutamyl-[protein] + nicotinamide</text>
        <dbReference type="Rhea" id="RHEA:58224"/>
        <dbReference type="Rhea" id="RHEA-COMP:10208"/>
        <dbReference type="Rhea" id="RHEA-COMP:15089"/>
        <dbReference type="ChEBI" id="CHEBI:17154"/>
        <dbReference type="ChEBI" id="CHEBI:29973"/>
        <dbReference type="ChEBI" id="CHEBI:57540"/>
        <dbReference type="ChEBI" id="CHEBI:142540"/>
    </reaction>
    <physiologicalReaction direction="left-to-right" evidence="2">
        <dbReference type="Rhea" id="RHEA:58225"/>
    </physiologicalReaction>
</comment>
<comment type="catalytic activity">
    <reaction evidence="1">
        <text>L-tyrosyl-[protein] + NAD(+) = O-(ADP-D-ribosyl)-L-tyrosyl-[protein] + nicotinamide + H(+)</text>
        <dbReference type="Rhea" id="RHEA:58236"/>
        <dbReference type="Rhea" id="RHEA-COMP:10136"/>
        <dbReference type="Rhea" id="RHEA-COMP:15092"/>
        <dbReference type="ChEBI" id="CHEBI:15378"/>
        <dbReference type="ChEBI" id="CHEBI:17154"/>
        <dbReference type="ChEBI" id="CHEBI:46858"/>
        <dbReference type="ChEBI" id="CHEBI:57540"/>
        <dbReference type="ChEBI" id="CHEBI:142557"/>
    </reaction>
    <physiologicalReaction direction="left-to-right" evidence="1">
        <dbReference type="Rhea" id="RHEA:58237"/>
    </physiologicalReaction>
</comment>
<comment type="catalytic activity">
    <reaction evidence="1">
        <text>L-histidyl-[protein] + NAD(+) = N(tele)-(ADP-D-ribosyl)-L-histidyl-[protein] + nicotinamide + H(+)</text>
        <dbReference type="Rhea" id="RHEA:72071"/>
        <dbReference type="Rhea" id="RHEA-COMP:9745"/>
        <dbReference type="Rhea" id="RHEA-COMP:18085"/>
        <dbReference type="ChEBI" id="CHEBI:15378"/>
        <dbReference type="ChEBI" id="CHEBI:17154"/>
        <dbReference type="ChEBI" id="CHEBI:29979"/>
        <dbReference type="ChEBI" id="CHEBI:57540"/>
        <dbReference type="ChEBI" id="CHEBI:191398"/>
    </reaction>
    <physiologicalReaction direction="left-to-right" evidence="1">
        <dbReference type="Rhea" id="RHEA:72072"/>
    </physiologicalReaction>
</comment>
<comment type="activity regulation">
    <text evidence="1">ADP-ribosyltransferase activity is regulated via an allosteric activation mechanism. In absence of activation signal, parp1 is autoinhibited by the PARP alpha-helical domain (also named HD region), which prevents effective NAD(+)-binding. Activity is highly stimulated by signals, such as DNA strand breaks. Binding to damaged DNA unfolds the PARP alpha-helical domain, relieving autoinhibition. Poly-ADP-ribosyltransferase activity is tightly regulated and parp1 is removed from damaged chromatin following initial poly-ADP-ribosylation of chromatin to avoid prolonged residence (trapping) that has cytotoxic consequences. A number of factors or post-translational modifications (auto-poly-ADP-ribosylation) promote parp1 removal from chromatin.</text>
</comment>
<comment type="subunit">
    <text evidence="1">Homodimer; PARP-type zinc-fingers from separate parp1 molecules form a dimer module that specifically recognizes DNA strand breaks.</text>
</comment>
<comment type="subcellular location">
    <subcellularLocation>
        <location evidence="1">Chromosome</location>
    </subcellularLocation>
    <subcellularLocation>
        <location evidence="1">Nucleus</location>
    </subcellularLocation>
    <subcellularLocation>
        <location evidence="1">Nucleus</location>
        <location evidence="1">Nucleolus</location>
    </subcellularLocation>
    <subcellularLocation>
        <location evidence="1">Cytoplasm</location>
        <location evidence="1">Cytosol</location>
    </subcellularLocation>
    <text evidence="1">Localizes to sites of DNA damage. Recognizes (via PARP-type zinc-fingers) and binds DNA strand breaks. Also binds normal/undamaged chromatin. Auto poly-ADP-ribosylation promotes dissociation from chromatin.</text>
</comment>
<comment type="domain">
    <text evidence="1">The two PARP-type zinc-fingers (also named Zn1 and Zn2) specifically recognize DNA strand breaks: PARP-type zinc-finger 1 binds PARP-type zinc-finger 2 from a separate parp1 molecule to form a dimeric module that specifically recognizes DNA strand breaks.</text>
</comment>
<comment type="domain">
    <text evidence="1">The PADR1-type (also named Zn3) zinc-finger mediates an interdomain contact and is required for the ability of parp1 to regulate chromatin structure.</text>
</comment>
<comment type="domain">
    <text evidence="1">The BRCT domain is able to bind intact DNA without activating the poly-ADP-ribosyltransferase activity. The BRCT domain mediates DNA intrastrand transfer (named 'monkey-bar mechanism') that allows rapid movements of parp1 through the nucleus.</text>
</comment>
<comment type="domain">
    <text evidence="4">The WGR domain bridges two nucleosomes, with the broken DNA aligned in a position suitable for ligation. The bridging induces structural changes in parp1 that signal the recognition of a DNA break to the catalytic domain of parp1.</text>
</comment>
<comment type="domain">
    <text evidence="1">The PARP alpha-helical domain (also named HD region) prevents effective NAD(+)-binding in absence of activation signal. Binding to damaged DNA unfolds the PARP alpha-helical domain, relieving autoinhibition.</text>
</comment>
<comment type="PTM">
    <text evidence="1">Poly-ADP-ribosylated on serine, glutamate and aspartate residues by autocatalysis. Auto-ADP-ribosylation on serine takes place following interaction with HPF1. Auto poly-ADP-ribosylation on serine residues promotes its dissociation from chromatin.</text>
</comment>
<comment type="similarity">
    <text evidence="11 13">Belongs to the ARTD/PARP family.</text>
</comment>
<accession>P31669</accession>
<proteinExistence type="evidence at transcript level"/>
<feature type="chain" id="PRO_0000211324" description="Poly [ADP-ribose] polymerase 1">
    <location>
        <begin position="1" status="less than"/>
        <end position="998"/>
    </location>
</feature>
<feature type="domain" description="PADR1 zinc-binding" evidence="11">
    <location>
        <begin position="211"/>
        <end position="345"/>
    </location>
</feature>
<feature type="domain" description="BRCT" evidence="6">
    <location>
        <begin position="369"/>
        <end position="460"/>
    </location>
</feature>
<feature type="domain" description="WGR" evidence="10">
    <location>
        <begin position="525"/>
        <end position="621"/>
    </location>
</feature>
<feature type="domain" description="PARP alpha-helical" evidence="9">
    <location>
        <begin position="645"/>
        <end position="762"/>
    </location>
</feature>
<feature type="domain" description="PARP catalytic" evidence="8">
    <location>
        <begin position="771"/>
        <end position="997"/>
    </location>
</feature>
<feature type="zinc finger region" description="PARP-type 1" evidence="7">
    <location>
        <begin position="1" status="less than"/>
        <end position="78"/>
    </location>
</feature>
<feature type="zinc finger region" description="PARP-type 2" evidence="7">
    <location>
        <begin position="99"/>
        <end position="189"/>
    </location>
</feature>
<feature type="region of interest" description="Disordered" evidence="12">
    <location>
        <begin position="185"/>
        <end position="211"/>
    </location>
</feature>
<feature type="region of interest" description="Zinc ribbon" evidence="11">
    <location>
        <begin position="276"/>
        <end position="318"/>
    </location>
</feature>
<feature type="region of interest" description="Disordered" evidence="12">
    <location>
        <begin position="348"/>
        <end position="370"/>
    </location>
</feature>
<feature type="region of interest" description="Automodification domain" evidence="1">
    <location>
        <begin position="357"/>
        <end position="507"/>
    </location>
</feature>
<feature type="region of interest" description="Disordered" evidence="12">
    <location>
        <begin position="471"/>
        <end position="510"/>
    </location>
</feature>
<feature type="short sequence motif" description="Nuclear localization signal" evidence="1">
    <location>
        <begin position="193"/>
        <end position="195"/>
    </location>
</feature>
<feature type="short sequence motif" description="Nuclear localization signal" evidence="1">
    <location>
        <begin position="207"/>
        <end position="212"/>
    </location>
</feature>
<feature type="compositionally biased region" description="Basic and acidic residues" evidence="12">
    <location>
        <begin position="190"/>
        <end position="201"/>
    </location>
</feature>
<feature type="compositionally biased region" description="Pro residues" evidence="12">
    <location>
        <begin position="348"/>
        <end position="361"/>
    </location>
</feature>
<feature type="compositionally biased region" description="Basic and acidic residues" evidence="12">
    <location>
        <begin position="492"/>
        <end position="506"/>
    </location>
</feature>
<feature type="active site" description="For poly [ADP-ribose] polymerase activity" evidence="1">
    <location>
        <position position="971"/>
    </location>
</feature>
<feature type="binding site" evidence="7">
    <location>
        <position position="8"/>
    </location>
    <ligand>
        <name>Zn(2+)</name>
        <dbReference type="ChEBI" id="CHEBI:29105"/>
        <label>1</label>
    </ligand>
</feature>
<feature type="binding site" evidence="7">
    <location>
        <position position="11"/>
    </location>
    <ligand>
        <name>Zn(2+)</name>
        <dbReference type="ChEBI" id="CHEBI:29105"/>
        <label>1</label>
    </ligand>
</feature>
<feature type="binding site" evidence="7">
    <location>
        <position position="40"/>
    </location>
    <ligand>
        <name>Zn(2+)</name>
        <dbReference type="ChEBI" id="CHEBI:29105"/>
        <label>1</label>
    </ligand>
</feature>
<feature type="binding site" evidence="7">
    <location>
        <position position="43"/>
    </location>
    <ligand>
        <name>Zn(2+)</name>
        <dbReference type="ChEBI" id="CHEBI:29105"/>
        <label>1</label>
    </ligand>
</feature>
<feature type="binding site" evidence="7">
    <location>
        <position position="111"/>
    </location>
    <ligand>
        <name>Zn(2+)</name>
        <dbReference type="ChEBI" id="CHEBI:29105"/>
        <label>2</label>
    </ligand>
</feature>
<feature type="binding site" evidence="7">
    <location>
        <position position="114"/>
    </location>
    <ligand>
        <name>Zn(2+)</name>
        <dbReference type="ChEBI" id="CHEBI:29105"/>
        <label>2</label>
    </ligand>
</feature>
<feature type="binding site" evidence="7">
    <location>
        <position position="145"/>
    </location>
    <ligand>
        <name>Zn(2+)</name>
        <dbReference type="ChEBI" id="CHEBI:29105"/>
        <label>2</label>
    </ligand>
</feature>
<feature type="binding site" evidence="7">
    <location>
        <position position="148"/>
    </location>
    <ligand>
        <name>Zn(2+)</name>
        <dbReference type="ChEBI" id="CHEBI:29105"/>
        <label>2</label>
    </ligand>
</feature>
<feature type="binding site" evidence="11">
    <location>
        <position position="281"/>
    </location>
    <ligand>
        <name>Zn(2+)</name>
        <dbReference type="ChEBI" id="CHEBI:29105"/>
        <label>3</label>
    </ligand>
</feature>
<feature type="binding site" evidence="11">
    <location>
        <position position="284"/>
    </location>
    <ligand>
        <name>Zn(2+)</name>
        <dbReference type="ChEBI" id="CHEBI:29105"/>
        <label>3</label>
    </ligand>
</feature>
<feature type="binding site" evidence="11">
    <location>
        <position position="297"/>
    </location>
    <ligand>
        <name>Zn(2+)</name>
        <dbReference type="ChEBI" id="CHEBI:29105"/>
        <label>3</label>
    </ligand>
</feature>
<feature type="binding site" evidence="11">
    <location>
        <position position="307"/>
    </location>
    <ligand>
        <name>Zn(2+)</name>
        <dbReference type="ChEBI" id="CHEBI:29105"/>
        <label>3</label>
    </ligand>
</feature>
<feature type="binding site" evidence="4">
    <location>
        <begin position="845"/>
        <end position="847"/>
    </location>
    <ligand>
        <name>NAD(+)</name>
        <dbReference type="ChEBI" id="CHEBI:57540"/>
    </ligand>
</feature>
<feature type="binding site" evidence="4">
    <location>
        <position position="854"/>
    </location>
    <ligand>
        <name>NAD(+)</name>
        <dbReference type="ChEBI" id="CHEBI:57540"/>
    </ligand>
</feature>
<feature type="binding site" evidence="4">
    <location>
        <position position="861"/>
    </location>
    <ligand>
        <name>NAD(+)</name>
        <dbReference type="ChEBI" id="CHEBI:57540"/>
    </ligand>
</feature>
<feature type="binding site" evidence="4">
    <location>
        <position position="887"/>
    </location>
    <ligand>
        <name>NAD(+)</name>
        <dbReference type="ChEBI" id="CHEBI:57540"/>
    </ligand>
</feature>
<feature type="modified residue" description="PolyADP-ribosyl glutamic acid" evidence="5">
    <location>
        <position position="391"/>
    </location>
</feature>
<feature type="modified residue" description="PolyADP-ribosyl glutamic acid" evidence="5">
    <location>
        <position position="397"/>
    </location>
</feature>
<feature type="modified residue" description="PolyADP-ribosyl glutamic acid" evidence="5">
    <location>
        <position position="419"/>
    </location>
</feature>
<feature type="modified residue" description="PolyADP-ribosyl glutamic acid" evidence="5">
    <location>
        <position position="428"/>
    </location>
</feature>
<feature type="modified residue" description="PolyADP-ribosyl glutamic acid" evidence="5">
    <location>
        <position position="429"/>
    </location>
</feature>
<feature type="modified residue" description="PolyADP-ribosyl glutamic acid" evidence="5">
    <location>
        <position position="445"/>
    </location>
</feature>
<feature type="modified residue" description="PolyADP-ribosyl glutamic acid" evidence="5">
    <location>
        <position position="447"/>
    </location>
</feature>
<feature type="modified residue" description="PolyADP-ribosyl glutamic acid" evidence="5">
    <location>
        <position position="454"/>
    </location>
</feature>
<feature type="modified residue" description="PolyADP-ribosyl glutamic acid" evidence="5">
    <location>
        <position position="467"/>
    </location>
</feature>
<feature type="modified residue" description="PolyADP-ribosyl glutamic acid" evidence="5">
    <location>
        <position position="471"/>
    </location>
</feature>
<feature type="modified residue" description="PolyADP-ribosyl glutamic acid" evidence="5">
    <location>
        <position position="477"/>
    </location>
</feature>
<feature type="modified residue" description="PolyADP-ribosyl glutamic acid" evidence="5">
    <location>
        <position position="495"/>
    </location>
</feature>
<feature type="modified residue" description="PolyADP-ribosyl glutamic acid" evidence="5">
    <location>
        <position position="496"/>
    </location>
</feature>
<feature type="modified residue" description="PolyADP-ribosyl glutamic acid" evidence="5">
    <location>
        <position position="503"/>
    </location>
</feature>
<feature type="sequence conflict" description="In Ref. 2." evidence="13" ref="2">
    <original>Q</original>
    <variation>E</variation>
    <location>
        <position position="746"/>
    </location>
</feature>
<feature type="non-terminal residue">
    <location>
        <position position="1"/>
    </location>
</feature>
<organism>
    <name type="scientific">Xenopus laevis</name>
    <name type="common">African clawed frog</name>
    <dbReference type="NCBI Taxonomy" id="8355"/>
    <lineage>
        <taxon>Eukaryota</taxon>
        <taxon>Metazoa</taxon>
        <taxon>Chordata</taxon>
        <taxon>Craniata</taxon>
        <taxon>Vertebrata</taxon>
        <taxon>Euteleostomi</taxon>
        <taxon>Amphibia</taxon>
        <taxon>Batrachia</taxon>
        <taxon>Anura</taxon>
        <taxon>Pipoidea</taxon>
        <taxon>Pipidae</taxon>
        <taxon>Xenopodinae</taxon>
        <taxon>Xenopus</taxon>
        <taxon>Xenopus</taxon>
    </lineage>
</organism>
<sequence length="998" mass="111126">AKSGRASCKKCGDNIAKESLGLAIMVQSPMFDGKVPHWHHYSCFWKRARVLSQGDIYGYTELRWEDQEMIKKAIETGGAAAGAGGDSKGGKGEMTLNDFAAEYAKSNRSACKGCEQKIEKGQIRISKKSVDVERPQLGMIDRWYHPDCFVSSREELDFLPSYSASQLKGFTILSAEDKDSLKKKLPAVKNEGKRKADEVDGHSAATKKKIKKEKEKESKLEKLLKEQTELIWHIKDELKKVCSTNDLKELLIANKQQVPSGETNIVDRVSDGMAFGALLPCEECSGQFVFKGDAYYCTGDLSAWTKCVAKTQTPNRKDWVTPKEFHEIPYLKKFKFKRHDRAFPPCAAPTPISPPAAPEPKPTVEETFPEGKPLTNTKVLLIGKLSKNKDEVKTLIEGLGGKVAGSAHKANLCISTNKEVKKMSKKMEEVKAANVRVVSDDFLKEVESGKSVQELLSQFGISSWGAEIKQEAVQPTEKQPSSGPVAGKSSGKVKEEKGSNKSEKKMKLTVKGGAAIDPDSELEDSCHVLETGGKIFSATLGLVDITRGTNSYYKLQLIEHDRDSRYWVFRSWGRVGTVIGSKKLEEMSSKEDAIEHFLNLYQDKTGNAWHSPNFTKYPKKFYPLEIDYGQEEDVVKKLSVGAGTKSKLAKPVQELIKLIFDVESMKKAMVEFEIDLQKMPLGKLSKRQIQSAYSILSQVQQAVSESLSEARLLDLSNQFYTLIPHDFGMKKPPLLNNLEYIQAKVQMLDNLLDIEVAYSLLRGGADDGEKDPIDVKYEKIKTDIKVVAKDSEESRIICDYVKNTHADTHNAYDLEVLEIFKIDREGEYQRYKPFKQLHNRQLLWHGSRTTNFAGILSQGLRIAPPEAPVTGYMFGKGIYFADMVSKSANYCHAMPGSPIGLILLGEVALGNMHELKAASQITKLPKGKHSVKGLGRTAPDPSATVQLDGVDVPLGKGTSANISDTSLLYNEYIVYDIAQVNLKYLLKLKFNYKGGMMW</sequence>
<protein>
    <recommendedName>
        <fullName>Poly [ADP-ribose] polymerase 1</fullName>
        <shortName>PARP-1</shortName>
        <ecNumber evidence="1">2.4.2.30</ecNumber>
    </recommendedName>
    <alternativeName>
        <fullName>ADP-ribosyltransferase diphtheria toxin-like 1</fullName>
        <shortName>ARTD1</shortName>
    </alternativeName>
    <alternativeName>
        <fullName evidence="1">DNA ADP-ribosyltransferase PARP1</fullName>
        <ecNumber evidence="1">2.4.2.-</ecNumber>
    </alternativeName>
    <alternativeName>
        <fullName>NAD(+) ADP-ribosyltransferase 1</fullName>
        <shortName>ADPRT 1</shortName>
    </alternativeName>
    <alternativeName>
        <fullName>Poly[ADP-ribose] synthase 1</fullName>
    </alternativeName>
    <alternativeName>
        <fullName evidence="1">Protein poly-ADP-ribosyltransferase PARP1</fullName>
        <ecNumber evidence="1">2.4.2.-</ecNumber>
    </alternativeName>
</protein>